<sequence length="245" mass="27147">MKLVLDTHTHTISSGHAYSTITENAREAYKKGLQLICMTDHGPKMPGAAHLWYFGNLKVLPEKIEGVEILKGVEVNIMDEEGNLDLPEGILKKLDIVIASLHDVCFEPSDDIERNTKAIINAIKNPYVDIIGHPGNPIYPIDIEKVLMAAKEYGKFIEINNSSFVSSRKGSEENCFLIAKKAKEMGVKIAVGSDAHVSFDVGRFEEALKVIKNAGITEDLVLNTDVGKIKEYLKEKKRKIGGEEE</sequence>
<organism>
    <name type="scientific">Thermoanaerobacter pseudethanolicus (strain ATCC 33223 / 39E)</name>
    <name type="common">Clostridium thermohydrosulfuricum</name>
    <dbReference type="NCBI Taxonomy" id="340099"/>
    <lineage>
        <taxon>Bacteria</taxon>
        <taxon>Bacillati</taxon>
        <taxon>Bacillota</taxon>
        <taxon>Clostridia</taxon>
        <taxon>Thermoanaerobacterales</taxon>
        <taxon>Thermoanaerobacteraceae</taxon>
        <taxon>Thermoanaerobacter</taxon>
    </lineage>
</organism>
<gene>
    <name type="ordered locus">Teth39_0577</name>
</gene>
<proteinExistence type="inferred from homology"/>
<comment type="cofactor">
    <cofactor evidence="1">
        <name>Zn(2+)</name>
        <dbReference type="ChEBI" id="CHEBI:29105"/>
    </cofactor>
    <text evidence="1">Binds 3 Zn(2+) ions per subunit.</text>
</comment>
<comment type="similarity">
    <text evidence="1">Belongs to the PHP family.</text>
</comment>
<dbReference type="EC" id="3.1.3.-" evidence="1"/>
<dbReference type="EMBL" id="CP000924">
    <property type="protein sequence ID" value="ABY94241.1"/>
    <property type="molecule type" value="Genomic_DNA"/>
</dbReference>
<dbReference type="RefSeq" id="WP_003866606.1">
    <property type="nucleotide sequence ID" value="NC_010321.1"/>
</dbReference>
<dbReference type="SMR" id="B0K794"/>
<dbReference type="STRING" id="340099.Teth39_0577"/>
<dbReference type="KEGG" id="tpd:Teth39_0577"/>
<dbReference type="eggNOG" id="COG1387">
    <property type="taxonomic scope" value="Bacteria"/>
</dbReference>
<dbReference type="HOGENOM" id="CLU_061999_0_1_9"/>
<dbReference type="Proteomes" id="UP000002156">
    <property type="component" value="Chromosome"/>
</dbReference>
<dbReference type="GO" id="GO:0005829">
    <property type="term" value="C:cytosol"/>
    <property type="evidence" value="ECO:0007669"/>
    <property type="project" value="TreeGrafter"/>
</dbReference>
<dbReference type="GO" id="GO:0016791">
    <property type="term" value="F:phosphatase activity"/>
    <property type="evidence" value="ECO:0007669"/>
    <property type="project" value="UniProtKB-UniRule"/>
</dbReference>
<dbReference type="GO" id="GO:0008270">
    <property type="term" value="F:zinc ion binding"/>
    <property type="evidence" value="ECO:0007669"/>
    <property type="project" value="UniProtKB-UniRule"/>
</dbReference>
<dbReference type="CDD" id="cd07437">
    <property type="entry name" value="PHP_HisPPase_Ycdx_like"/>
    <property type="match status" value="1"/>
</dbReference>
<dbReference type="Gene3D" id="3.20.20.140">
    <property type="entry name" value="Metal-dependent hydrolases"/>
    <property type="match status" value="1"/>
</dbReference>
<dbReference type="HAMAP" id="MF_01561">
    <property type="entry name" value="YcdX_phosphat"/>
    <property type="match status" value="1"/>
</dbReference>
<dbReference type="InterPro" id="IPR023710">
    <property type="entry name" value="Phosphatase_YcdX_put"/>
</dbReference>
<dbReference type="InterPro" id="IPR004013">
    <property type="entry name" value="PHP_dom"/>
</dbReference>
<dbReference type="InterPro" id="IPR050243">
    <property type="entry name" value="PHP_phosphatase"/>
</dbReference>
<dbReference type="InterPro" id="IPR003141">
    <property type="entry name" value="Pol/His_phosphatase_N"/>
</dbReference>
<dbReference type="InterPro" id="IPR016195">
    <property type="entry name" value="Pol/histidinol_Pase-like"/>
</dbReference>
<dbReference type="NCBIfam" id="NF006702">
    <property type="entry name" value="PRK09248.1"/>
    <property type="match status" value="1"/>
</dbReference>
<dbReference type="PANTHER" id="PTHR36928">
    <property type="entry name" value="PHOSPHATASE YCDX-RELATED"/>
    <property type="match status" value="1"/>
</dbReference>
<dbReference type="PANTHER" id="PTHR36928:SF1">
    <property type="entry name" value="PHOSPHATASE YCDX-RELATED"/>
    <property type="match status" value="1"/>
</dbReference>
<dbReference type="Pfam" id="PF02811">
    <property type="entry name" value="PHP"/>
    <property type="match status" value="1"/>
</dbReference>
<dbReference type="SMART" id="SM00481">
    <property type="entry name" value="POLIIIAc"/>
    <property type="match status" value="1"/>
</dbReference>
<dbReference type="SUPFAM" id="SSF89550">
    <property type="entry name" value="PHP domain-like"/>
    <property type="match status" value="1"/>
</dbReference>
<feature type="chain" id="PRO_0000382657" description="Probable phosphatase Teth39_0577">
    <location>
        <begin position="1"/>
        <end position="245"/>
    </location>
</feature>
<feature type="binding site" evidence="1">
    <location>
        <position position="8"/>
    </location>
    <ligand>
        <name>Zn(2+)</name>
        <dbReference type="ChEBI" id="CHEBI:29105"/>
        <label>1</label>
    </ligand>
</feature>
<feature type="binding site" evidence="1">
    <location>
        <position position="10"/>
    </location>
    <ligand>
        <name>Zn(2+)</name>
        <dbReference type="ChEBI" id="CHEBI:29105"/>
        <label>1</label>
    </ligand>
</feature>
<feature type="binding site" evidence="1">
    <location>
        <position position="16"/>
    </location>
    <ligand>
        <name>Zn(2+)</name>
        <dbReference type="ChEBI" id="CHEBI:29105"/>
        <label>2</label>
    </ligand>
</feature>
<feature type="binding site" evidence="1">
    <location>
        <position position="41"/>
    </location>
    <ligand>
        <name>Zn(2+)</name>
        <dbReference type="ChEBI" id="CHEBI:29105"/>
        <label>2</label>
    </ligand>
</feature>
<feature type="binding site" evidence="1">
    <location>
        <position position="74"/>
    </location>
    <ligand>
        <name>Zn(2+)</name>
        <dbReference type="ChEBI" id="CHEBI:29105"/>
        <label>1</label>
    </ligand>
</feature>
<feature type="binding site" evidence="1">
    <location>
        <position position="74"/>
    </location>
    <ligand>
        <name>Zn(2+)</name>
        <dbReference type="ChEBI" id="CHEBI:29105"/>
        <label>3</label>
    </ligand>
</feature>
<feature type="binding site" evidence="1">
    <location>
        <position position="102"/>
    </location>
    <ligand>
        <name>Zn(2+)</name>
        <dbReference type="ChEBI" id="CHEBI:29105"/>
        <label>3</label>
    </ligand>
</feature>
<feature type="binding site" evidence="1">
    <location>
        <position position="133"/>
    </location>
    <ligand>
        <name>Zn(2+)</name>
        <dbReference type="ChEBI" id="CHEBI:29105"/>
        <label>3</label>
    </ligand>
</feature>
<feature type="binding site" evidence="1">
    <location>
        <position position="194"/>
    </location>
    <ligand>
        <name>Zn(2+)</name>
        <dbReference type="ChEBI" id="CHEBI:29105"/>
        <label>1</label>
    </ligand>
</feature>
<feature type="binding site" evidence="1">
    <location>
        <position position="196"/>
    </location>
    <ligand>
        <name>Zn(2+)</name>
        <dbReference type="ChEBI" id="CHEBI:29105"/>
        <label>2</label>
    </ligand>
</feature>
<protein>
    <recommendedName>
        <fullName evidence="1">Probable phosphatase Teth39_0577</fullName>
        <ecNumber evidence="1">3.1.3.-</ecNumber>
    </recommendedName>
</protein>
<accession>B0K794</accession>
<name>Y577_THEP3</name>
<evidence type="ECO:0000255" key="1">
    <source>
        <dbReference type="HAMAP-Rule" id="MF_01561"/>
    </source>
</evidence>
<reference key="1">
    <citation type="submission" date="2008-01" db="EMBL/GenBank/DDBJ databases">
        <title>Complete sequence of Thermoanaerobacter pseudethanolicus 39E.</title>
        <authorList>
            <person name="Copeland A."/>
            <person name="Lucas S."/>
            <person name="Lapidus A."/>
            <person name="Barry K."/>
            <person name="Glavina del Rio T."/>
            <person name="Dalin E."/>
            <person name="Tice H."/>
            <person name="Pitluck S."/>
            <person name="Bruce D."/>
            <person name="Goodwin L."/>
            <person name="Saunders E."/>
            <person name="Brettin T."/>
            <person name="Detter J.C."/>
            <person name="Han C."/>
            <person name="Schmutz J."/>
            <person name="Larimer F."/>
            <person name="Land M."/>
            <person name="Hauser L."/>
            <person name="Kyrpides N."/>
            <person name="Lykidis A."/>
            <person name="Hemme C."/>
            <person name="Fields M.W."/>
            <person name="He Z."/>
            <person name="Zhou J."/>
            <person name="Richardson P."/>
        </authorList>
    </citation>
    <scope>NUCLEOTIDE SEQUENCE [LARGE SCALE GENOMIC DNA]</scope>
    <source>
        <strain>ATCC 33223 / DSM 2355 / 39E</strain>
    </source>
</reference>
<keyword id="KW-0378">Hydrolase</keyword>
<keyword id="KW-0479">Metal-binding</keyword>
<keyword id="KW-1185">Reference proteome</keyword>
<keyword id="KW-0862">Zinc</keyword>